<keyword id="KW-0004">4Fe-4S</keyword>
<keyword id="KW-0963">Cytoplasm</keyword>
<keyword id="KW-0408">Iron</keyword>
<keyword id="KW-0411">Iron-sulfur</keyword>
<keyword id="KW-0479">Metal-binding</keyword>
<keyword id="KW-1185">Reference proteome</keyword>
<keyword id="KW-0949">S-adenosyl-L-methionine</keyword>
<keyword id="KW-0808">Transferase</keyword>
<reference key="1">
    <citation type="submission" date="2003-06" db="EMBL/GenBank/DDBJ databases">
        <title>The complete genome sequence of Haemophilus ducreyi.</title>
        <authorList>
            <person name="Munson R.S. Jr."/>
            <person name="Ray W.C."/>
            <person name="Mahairas G."/>
            <person name="Sabo P."/>
            <person name="Mungur R."/>
            <person name="Johnson L."/>
            <person name="Nguyen D."/>
            <person name="Wang J."/>
            <person name="Forst C."/>
            <person name="Hood L."/>
        </authorList>
    </citation>
    <scope>NUCLEOTIDE SEQUENCE [LARGE SCALE GENOMIC DNA]</scope>
    <source>
        <strain>35000HP / ATCC 700724</strain>
    </source>
</reference>
<feature type="chain" id="PRO_0000102319" description="Lipoyl synthase">
    <location>
        <begin position="1"/>
        <end position="330"/>
    </location>
</feature>
<feature type="domain" description="Radical SAM core" evidence="2">
    <location>
        <begin position="89"/>
        <end position="306"/>
    </location>
</feature>
<feature type="binding site" evidence="1">
    <location>
        <position position="77"/>
    </location>
    <ligand>
        <name>[4Fe-4S] cluster</name>
        <dbReference type="ChEBI" id="CHEBI:49883"/>
        <label>1</label>
    </ligand>
</feature>
<feature type="binding site" evidence="1">
    <location>
        <position position="82"/>
    </location>
    <ligand>
        <name>[4Fe-4S] cluster</name>
        <dbReference type="ChEBI" id="CHEBI:49883"/>
        <label>1</label>
    </ligand>
</feature>
<feature type="binding site" evidence="1">
    <location>
        <position position="88"/>
    </location>
    <ligand>
        <name>[4Fe-4S] cluster</name>
        <dbReference type="ChEBI" id="CHEBI:49883"/>
        <label>1</label>
    </ligand>
</feature>
<feature type="binding site" evidence="1">
    <location>
        <position position="103"/>
    </location>
    <ligand>
        <name>[4Fe-4S] cluster</name>
        <dbReference type="ChEBI" id="CHEBI:49883"/>
        <label>2</label>
        <note>4Fe-4S-S-AdoMet</note>
    </ligand>
</feature>
<feature type="binding site" evidence="1">
    <location>
        <position position="107"/>
    </location>
    <ligand>
        <name>[4Fe-4S] cluster</name>
        <dbReference type="ChEBI" id="CHEBI:49883"/>
        <label>2</label>
        <note>4Fe-4S-S-AdoMet</note>
    </ligand>
</feature>
<feature type="binding site" evidence="1">
    <location>
        <position position="110"/>
    </location>
    <ligand>
        <name>[4Fe-4S] cluster</name>
        <dbReference type="ChEBI" id="CHEBI:49883"/>
        <label>2</label>
        <note>4Fe-4S-S-AdoMet</note>
    </ligand>
</feature>
<feature type="binding site" evidence="1">
    <location>
        <position position="317"/>
    </location>
    <ligand>
        <name>[4Fe-4S] cluster</name>
        <dbReference type="ChEBI" id="CHEBI:49883"/>
        <label>1</label>
    </ligand>
</feature>
<accession>Q7VKB1</accession>
<comment type="function">
    <text evidence="1">Catalyzes the radical-mediated insertion of two sulfur atoms into the C-6 and C-8 positions of the octanoyl moiety bound to the lipoyl domains of lipoate-dependent enzymes, thereby converting the octanoylated domains into lipoylated derivatives.</text>
</comment>
<comment type="catalytic activity">
    <reaction evidence="1">
        <text>[[Fe-S] cluster scaffold protein carrying a second [4Fe-4S](2+) cluster] + N(6)-octanoyl-L-lysyl-[protein] + 2 oxidized [2Fe-2S]-[ferredoxin] + 2 S-adenosyl-L-methionine + 4 H(+) = [[Fe-S] cluster scaffold protein] + N(6)-[(R)-dihydrolipoyl]-L-lysyl-[protein] + 4 Fe(3+) + 2 hydrogen sulfide + 2 5'-deoxyadenosine + 2 L-methionine + 2 reduced [2Fe-2S]-[ferredoxin]</text>
        <dbReference type="Rhea" id="RHEA:16585"/>
        <dbReference type="Rhea" id="RHEA-COMP:9928"/>
        <dbReference type="Rhea" id="RHEA-COMP:10000"/>
        <dbReference type="Rhea" id="RHEA-COMP:10001"/>
        <dbReference type="Rhea" id="RHEA-COMP:10475"/>
        <dbReference type="Rhea" id="RHEA-COMP:14568"/>
        <dbReference type="Rhea" id="RHEA-COMP:14569"/>
        <dbReference type="ChEBI" id="CHEBI:15378"/>
        <dbReference type="ChEBI" id="CHEBI:17319"/>
        <dbReference type="ChEBI" id="CHEBI:29034"/>
        <dbReference type="ChEBI" id="CHEBI:29919"/>
        <dbReference type="ChEBI" id="CHEBI:33722"/>
        <dbReference type="ChEBI" id="CHEBI:33737"/>
        <dbReference type="ChEBI" id="CHEBI:33738"/>
        <dbReference type="ChEBI" id="CHEBI:57844"/>
        <dbReference type="ChEBI" id="CHEBI:59789"/>
        <dbReference type="ChEBI" id="CHEBI:78809"/>
        <dbReference type="ChEBI" id="CHEBI:83100"/>
        <dbReference type="EC" id="2.8.1.8"/>
    </reaction>
</comment>
<comment type="cofactor">
    <cofactor evidence="1">
        <name>[4Fe-4S] cluster</name>
        <dbReference type="ChEBI" id="CHEBI:49883"/>
    </cofactor>
    <text evidence="1">Binds 2 [4Fe-4S] clusters per subunit. One cluster is coordinated with 3 cysteines and an exchangeable S-adenosyl-L-methionine.</text>
</comment>
<comment type="pathway">
    <text evidence="1">Protein modification; protein lipoylation via endogenous pathway; protein N(6)-(lipoyl)lysine from octanoyl-[acyl-carrier-protein]: step 2/2.</text>
</comment>
<comment type="subcellular location">
    <subcellularLocation>
        <location evidence="1">Cytoplasm</location>
    </subcellularLocation>
</comment>
<comment type="similarity">
    <text evidence="1">Belongs to the radical SAM superfamily. Lipoyl synthase family.</text>
</comment>
<evidence type="ECO:0000255" key="1">
    <source>
        <dbReference type="HAMAP-Rule" id="MF_00206"/>
    </source>
</evidence>
<evidence type="ECO:0000255" key="2">
    <source>
        <dbReference type="PROSITE-ProRule" id="PRU01266"/>
    </source>
</evidence>
<dbReference type="EC" id="2.8.1.8" evidence="1"/>
<dbReference type="EMBL" id="AE017143">
    <property type="protein sequence ID" value="AAP96721.1"/>
    <property type="molecule type" value="Genomic_DNA"/>
</dbReference>
<dbReference type="RefSeq" id="WP_010945742.1">
    <property type="nucleotide sequence ID" value="NC_002940.2"/>
</dbReference>
<dbReference type="SMR" id="Q7VKB1"/>
<dbReference type="STRING" id="233412.HD_2012"/>
<dbReference type="DNASU" id="1491840"/>
<dbReference type="KEGG" id="hdu:HD_2012"/>
<dbReference type="eggNOG" id="COG0320">
    <property type="taxonomic scope" value="Bacteria"/>
</dbReference>
<dbReference type="HOGENOM" id="CLU_033144_2_1_6"/>
<dbReference type="OrthoDB" id="9787898at2"/>
<dbReference type="UniPathway" id="UPA00538">
    <property type="reaction ID" value="UER00593"/>
</dbReference>
<dbReference type="Proteomes" id="UP000001022">
    <property type="component" value="Chromosome"/>
</dbReference>
<dbReference type="GO" id="GO:0005737">
    <property type="term" value="C:cytoplasm"/>
    <property type="evidence" value="ECO:0007669"/>
    <property type="project" value="UniProtKB-SubCell"/>
</dbReference>
<dbReference type="GO" id="GO:0051539">
    <property type="term" value="F:4 iron, 4 sulfur cluster binding"/>
    <property type="evidence" value="ECO:0007669"/>
    <property type="project" value="UniProtKB-UniRule"/>
</dbReference>
<dbReference type="GO" id="GO:0016992">
    <property type="term" value="F:lipoate synthase activity"/>
    <property type="evidence" value="ECO:0007669"/>
    <property type="project" value="UniProtKB-UniRule"/>
</dbReference>
<dbReference type="GO" id="GO:0046872">
    <property type="term" value="F:metal ion binding"/>
    <property type="evidence" value="ECO:0007669"/>
    <property type="project" value="UniProtKB-KW"/>
</dbReference>
<dbReference type="CDD" id="cd01335">
    <property type="entry name" value="Radical_SAM"/>
    <property type="match status" value="1"/>
</dbReference>
<dbReference type="FunFam" id="3.20.20.70:FF:000040">
    <property type="entry name" value="Lipoyl synthase"/>
    <property type="match status" value="1"/>
</dbReference>
<dbReference type="Gene3D" id="3.20.20.70">
    <property type="entry name" value="Aldolase class I"/>
    <property type="match status" value="1"/>
</dbReference>
<dbReference type="HAMAP" id="MF_00206">
    <property type="entry name" value="Lipoyl_synth"/>
    <property type="match status" value="1"/>
</dbReference>
<dbReference type="InterPro" id="IPR013785">
    <property type="entry name" value="Aldolase_TIM"/>
</dbReference>
<dbReference type="InterPro" id="IPR006638">
    <property type="entry name" value="Elp3/MiaA/NifB-like_rSAM"/>
</dbReference>
<dbReference type="InterPro" id="IPR003698">
    <property type="entry name" value="Lipoyl_synth"/>
</dbReference>
<dbReference type="InterPro" id="IPR007197">
    <property type="entry name" value="rSAM"/>
</dbReference>
<dbReference type="NCBIfam" id="TIGR00510">
    <property type="entry name" value="lipA"/>
    <property type="match status" value="1"/>
</dbReference>
<dbReference type="NCBIfam" id="NF004019">
    <property type="entry name" value="PRK05481.1"/>
    <property type="match status" value="1"/>
</dbReference>
<dbReference type="NCBIfam" id="NF009544">
    <property type="entry name" value="PRK12928.1"/>
    <property type="match status" value="1"/>
</dbReference>
<dbReference type="PANTHER" id="PTHR10949">
    <property type="entry name" value="LIPOYL SYNTHASE"/>
    <property type="match status" value="1"/>
</dbReference>
<dbReference type="PANTHER" id="PTHR10949:SF0">
    <property type="entry name" value="LIPOYL SYNTHASE, MITOCHONDRIAL"/>
    <property type="match status" value="1"/>
</dbReference>
<dbReference type="Pfam" id="PF04055">
    <property type="entry name" value="Radical_SAM"/>
    <property type="match status" value="1"/>
</dbReference>
<dbReference type="PIRSF" id="PIRSF005963">
    <property type="entry name" value="Lipoyl_synth"/>
    <property type="match status" value="1"/>
</dbReference>
<dbReference type="SFLD" id="SFLDF00271">
    <property type="entry name" value="lipoyl_synthase"/>
    <property type="match status" value="1"/>
</dbReference>
<dbReference type="SFLD" id="SFLDS00029">
    <property type="entry name" value="Radical_SAM"/>
    <property type="match status" value="1"/>
</dbReference>
<dbReference type="SMART" id="SM00729">
    <property type="entry name" value="Elp3"/>
    <property type="match status" value="1"/>
</dbReference>
<dbReference type="SUPFAM" id="SSF102114">
    <property type="entry name" value="Radical SAM enzymes"/>
    <property type="match status" value="1"/>
</dbReference>
<dbReference type="PROSITE" id="PS51918">
    <property type="entry name" value="RADICAL_SAM"/>
    <property type="match status" value="1"/>
</dbReference>
<sequence length="330" mass="37512">MTTAIGKKTTKLEPFKMERGVKYRDAAKTSVIQVRNIDPDQELLKKPEWMKIKLPTNSAKIDSIKYGMRRHGLHSVCEEASCPNLHECFNHGTATFMIMGAICTRRCPFCDVAHGKPLPLDPYEPRKVAETVQDMKLKYVVITSVDRDDLADRGAAHFAATVREIKALNPECKVEILVPDFRGRVEQAVAILKQNPPDVFNHNLENVPRLYREIRPGADYKWSLELLKIFKQEFPNIPTKSGLMVGLGETNEEILAVMQDLRDHGVTMLTVGQYLQPSRHHLRVERYVPPAEFEMFRSEAEKMGFEHAACGPFVRSSYHADLQAKGELVK</sequence>
<name>LIPA_HAEDU</name>
<gene>
    <name evidence="1" type="primary">lipA</name>
    <name type="ordered locus">HD_2012</name>
</gene>
<proteinExistence type="inferred from homology"/>
<protein>
    <recommendedName>
        <fullName evidence="1">Lipoyl synthase</fullName>
        <ecNumber evidence="1">2.8.1.8</ecNumber>
    </recommendedName>
    <alternativeName>
        <fullName evidence="1">Lip-syn</fullName>
        <shortName evidence="1">LS</shortName>
    </alternativeName>
    <alternativeName>
        <fullName evidence="1">Lipoate synthase</fullName>
    </alternativeName>
    <alternativeName>
        <fullName evidence="1">Lipoic acid synthase</fullName>
    </alternativeName>
    <alternativeName>
        <fullName evidence="1">Sulfur insertion protein LipA</fullName>
    </alternativeName>
</protein>
<organism>
    <name type="scientific">Haemophilus ducreyi (strain 35000HP / ATCC 700724)</name>
    <dbReference type="NCBI Taxonomy" id="233412"/>
    <lineage>
        <taxon>Bacteria</taxon>
        <taxon>Pseudomonadati</taxon>
        <taxon>Pseudomonadota</taxon>
        <taxon>Gammaproteobacteria</taxon>
        <taxon>Pasteurellales</taxon>
        <taxon>Pasteurellaceae</taxon>
        <taxon>Haemophilus</taxon>
    </lineage>
</organism>